<feature type="chain" id="PRO_0000335326" description="Ribosomal RNA small subunit methyltransferase G">
    <location>
        <begin position="1"/>
        <end position="228"/>
    </location>
</feature>
<feature type="binding site" evidence="1">
    <location>
        <position position="89"/>
    </location>
    <ligand>
        <name>S-adenosyl-L-methionine</name>
        <dbReference type="ChEBI" id="CHEBI:59789"/>
    </ligand>
</feature>
<feature type="binding site" evidence="1">
    <location>
        <position position="94"/>
    </location>
    <ligand>
        <name>S-adenosyl-L-methionine</name>
        <dbReference type="ChEBI" id="CHEBI:59789"/>
    </ligand>
</feature>
<feature type="binding site" evidence="1">
    <location>
        <begin position="140"/>
        <end position="141"/>
    </location>
    <ligand>
        <name>S-adenosyl-L-methionine</name>
        <dbReference type="ChEBI" id="CHEBI:59789"/>
    </ligand>
</feature>
<feature type="binding site" evidence="1">
    <location>
        <position position="159"/>
    </location>
    <ligand>
        <name>S-adenosyl-L-methionine</name>
        <dbReference type="ChEBI" id="CHEBI:59789"/>
    </ligand>
</feature>
<accession>Q39KY8</accession>
<dbReference type="EC" id="2.1.1.170" evidence="1"/>
<dbReference type="EMBL" id="CP000151">
    <property type="protein sequence ID" value="ABB06878.1"/>
    <property type="molecule type" value="Genomic_DNA"/>
</dbReference>
<dbReference type="RefSeq" id="WP_011350516.1">
    <property type="nucleotide sequence ID" value="NC_007510.1"/>
</dbReference>
<dbReference type="SMR" id="Q39KY8"/>
<dbReference type="GeneID" id="45093184"/>
<dbReference type="KEGG" id="bur:Bcep18194_A3276"/>
<dbReference type="PATRIC" id="fig|482957.22.peg.106"/>
<dbReference type="HOGENOM" id="CLU_065341_2_0_4"/>
<dbReference type="Proteomes" id="UP000002705">
    <property type="component" value="Chromosome 1"/>
</dbReference>
<dbReference type="GO" id="GO:0005829">
    <property type="term" value="C:cytosol"/>
    <property type="evidence" value="ECO:0007669"/>
    <property type="project" value="TreeGrafter"/>
</dbReference>
<dbReference type="GO" id="GO:0070043">
    <property type="term" value="F:rRNA (guanine-N7-)-methyltransferase activity"/>
    <property type="evidence" value="ECO:0007669"/>
    <property type="project" value="UniProtKB-UniRule"/>
</dbReference>
<dbReference type="CDD" id="cd02440">
    <property type="entry name" value="AdoMet_MTases"/>
    <property type="match status" value="1"/>
</dbReference>
<dbReference type="Gene3D" id="3.40.50.150">
    <property type="entry name" value="Vaccinia Virus protein VP39"/>
    <property type="match status" value="1"/>
</dbReference>
<dbReference type="HAMAP" id="MF_00074">
    <property type="entry name" value="16SrRNA_methyltr_G"/>
    <property type="match status" value="1"/>
</dbReference>
<dbReference type="InterPro" id="IPR003682">
    <property type="entry name" value="rRNA_ssu_MeTfrase_G"/>
</dbReference>
<dbReference type="InterPro" id="IPR029063">
    <property type="entry name" value="SAM-dependent_MTases_sf"/>
</dbReference>
<dbReference type="NCBIfam" id="TIGR00138">
    <property type="entry name" value="rsmG_gidB"/>
    <property type="match status" value="1"/>
</dbReference>
<dbReference type="PANTHER" id="PTHR31760">
    <property type="entry name" value="S-ADENOSYL-L-METHIONINE-DEPENDENT METHYLTRANSFERASES SUPERFAMILY PROTEIN"/>
    <property type="match status" value="1"/>
</dbReference>
<dbReference type="PANTHER" id="PTHR31760:SF0">
    <property type="entry name" value="S-ADENOSYL-L-METHIONINE-DEPENDENT METHYLTRANSFERASES SUPERFAMILY PROTEIN"/>
    <property type="match status" value="1"/>
</dbReference>
<dbReference type="Pfam" id="PF02527">
    <property type="entry name" value="GidB"/>
    <property type="match status" value="1"/>
</dbReference>
<dbReference type="PIRSF" id="PIRSF003078">
    <property type="entry name" value="GidB"/>
    <property type="match status" value="1"/>
</dbReference>
<dbReference type="SUPFAM" id="SSF53335">
    <property type="entry name" value="S-adenosyl-L-methionine-dependent methyltransferases"/>
    <property type="match status" value="1"/>
</dbReference>
<evidence type="ECO:0000255" key="1">
    <source>
        <dbReference type="HAMAP-Rule" id="MF_00074"/>
    </source>
</evidence>
<protein>
    <recommendedName>
        <fullName evidence="1">Ribosomal RNA small subunit methyltransferase G</fullName>
        <ecNumber evidence="1">2.1.1.170</ecNumber>
    </recommendedName>
    <alternativeName>
        <fullName evidence="1">16S rRNA 7-methylguanosine methyltransferase</fullName>
        <shortName evidence="1">16S rRNA m7G methyltransferase</shortName>
    </alternativeName>
</protein>
<sequence length="228" mass="24920">MTARRAPAVNRDGLEQMLVEGTTALDLALTDAQHNQLLDYVALLGKWNAVYNLTAIRDPKQMLIQHILDSLSIVSHLRGRASARVLDVGSGGGLPGIVLAIVEPDWQITLNDIVQKKSAFQTQMRAELKLANLSVVTGRVESLQPGVEVPEKFDMIVSRAFADLSDFVKLARHLVAPGGSIWAMKGVHPDDEIARLPEGSRVKQTIRLAVPMLDAERHLIEVAVDEAN</sequence>
<reference key="1">
    <citation type="submission" date="2005-10" db="EMBL/GenBank/DDBJ databases">
        <title>Complete sequence of chromosome 1 of Burkholderia sp. 383.</title>
        <authorList>
            <consortium name="US DOE Joint Genome Institute"/>
            <person name="Copeland A."/>
            <person name="Lucas S."/>
            <person name="Lapidus A."/>
            <person name="Barry K."/>
            <person name="Detter J.C."/>
            <person name="Glavina T."/>
            <person name="Hammon N."/>
            <person name="Israni S."/>
            <person name="Pitluck S."/>
            <person name="Chain P."/>
            <person name="Malfatti S."/>
            <person name="Shin M."/>
            <person name="Vergez L."/>
            <person name="Schmutz J."/>
            <person name="Larimer F."/>
            <person name="Land M."/>
            <person name="Kyrpides N."/>
            <person name="Lykidis A."/>
            <person name="Richardson P."/>
        </authorList>
    </citation>
    <scope>NUCLEOTIDE SEQUENCE [LARGE SCALE GENOMIC DNA]</scope>
    <source>
        <strain>ATCC 17760 / DSM 23089 / LMG 22485 / NCIMB 9086 / R18194 / 383</strain>
    </source>
</reference>
<comment type="function">
    <text evidence="1">Specifically methylates the N7 position of guanine in position 527 of 16S rRNA.</text>
</comment>
<comment type="catalytic activity">
    <reaction evidence="1">
        <text>guanosine(527) in 16S rRNA + S-adenosyl-L-methionine = N(7)-methylguanosine(527) in 16S rRNA + S-adenosyl-L-homocysteine</text>
        <dbReference type="Rhea" id="RHEA:42732"/>
        <dbReference type="Rhea" id="RHEA-COMP:10209"/>
        <dbReference type="Rhea" id="RHEA-COMP:10210"/>
        <dbReference type="ChEBI" id="CHEBI:57856"/>
        <dbReference type="ChEBI" id="CHEBI:59789"/>
        <dbReference type="ChEBI" id="CHEBI:74269"/>
        <dbReference type="ChEBI" id="CHEBI:74480"/>
        <dbReference type="EC" id="2.1.1.170"/>
    </reaction>
</comment>
<comment type="subcellular location">
    <subcellularLocation>
        <location evidence="1">Cytoplasm</location>
    </subcellularLocation>
</comment>
<comment type="similarity">
    <text evidence="1">Belongs to the methyltransferase superfamily. RNA methyltransferase RsmG family.</text>
</comment>
<proteinExistence type="inferred from homology"/>
<gene>
    <name evidence="1" type="primary">rsmG</name>
    <name type="ordered locus">Bcep18194_A3276</name>
</gene>
<name>RSMG_BURL3</name>
<keyword id="KW-0963">Cytoplasm</keyword>
<keyword id="KW-0489">Methyltransferase</keyword>
<keyword id="KW-0698">rRNA processing</keyword>
<keyword id="KW-0949">S-adenosyl-L-methionine</keyword>
<keyword id="KW-0808">Transferase</keyword>
<organism>
    <name type="scientific">Burkholderia lata (strain ATCC 17760 / DSM 23089 / LMG 22485 / NCIMB 9086 / R18194 / 383)</name>
    <dbReference type="NCBI Taxonomy" id="482957"/>
    <lineage>
        <taxon>Bacteria</taxon>
        <taxon>Pseudomonadati</taxon>
        <taxon>Pseudomonadota</taxon>
        <taxon>Betaproteobacteria</taxon>
        <taxon>Burkholderiales</taxon>
        <taxon>Burkholderiaceae</taxon>
        <taxon>Burkholderia</taxon>
        <taxon>Burkholderia cepacia complex</taxon>
    </lineage>
</organism>